<keyword id="KW-0067">ATP-binding</keyword>
<keyword id="KW-0418">Kinase</keyword>
<keyword id="KW-0547">Nucleotide-binding</keyword>
<keyword id="KW-0597">Phosphoprotein</keyword>
<keyword id="KW-0723">Serine/threonine-protein kinase</keyword>
<keyword id="KW-0808">Transferase</keyword>
<organism>
    <name type="scientific">Chlamydia caviae (strain ATCC VR-813 / DSM 19441 / 03DC25 / GPIC)</name>
    <name type="common">Chlamydophila caviae</name>
    <dbReference type="NCBI Taxonomy" id="227941"/>
    <lineage>
        <taxon>Bacteria</taxon>
        <taxon>Pseudomonadati</taxon>
        <taxon>Chlamydiota</taxon>
        <taxon>Chlamydiia</taxon>
        <taxon>Chlamydiales</taxon>
        <taxon>Chlamydiaceae</taxon>
        <taxon>Chlamydia/Chlamydophila group</taxon>
        <taxon>Chlamydia</taxon>
    </lineage>
</organism>
<protein>
    <recommendedName>
        <fullName evidence="1">Serine/threonine-protein kinase PknD</fullName>
        <ecNumber evidence="1">2.7.11.1</ecNumber>
    </recommendedName>
</protein>
<evidence type="ECO:0000255" key="1">
    <source>
        <dbReference type="HAMAP-Rule" id="MF_01957"/>
    </source>
</evidence>
<proteinExistence type="inferred from homology"/>
<comment type="function">
    <text evidence="1">Together with the serine/threonine kinase Pkn1, may play a role in the specific interactions with host proteins during intracellular growth.</text>
</comment>
<comment type="catalytic activity">
    <reaction evidence="1">
        <text>L-seryl-[protein] + ATP = O-phospho-L-seryl-[protein] + ADP + H(+)</text>
        <dbReference type="Rhea" id="RHEA:17989"/>
        <dbReference type="Rhea" id="RHEA-COMP:9863"/>
        <dbReference type="Rhea" id="RHEA-COMP:11604"/>
        <dbReference type="ChEBI" id="CHEBI:15378"/>
        <dbReference type="ChEBI" id="CHEBI:29999"/>
        <dbReference type="ChEBI" id="CHEBI:30616"/>
        <dbReference type="ChEBI" id="CHEBI:83421"/>
        <dbReference type="ChEBI" id="CHEBI:456216"/>
        <dbReference type="EC" id="2.7.11.1"/>
    </reaction>
</comment>
<comment type="catalytic activity">
    <reaction evidence="1">
        <text>L-threonyl-[protein] + ATP = O-phospho-L-threonyl-[protein] + ADP + H(+)</text>
        <dbReference type="Rhea" id="RHEA:46608"/>
        <dbReference type="Rhea" id="RHEA-COMP:11060"/>
        <dbReference type="Rhea" id="RHEA-COMP:11605"/>
        <dbReference type="ChEBI" id="CHEBI:15378"/>
        <dbReference type="ChEBI" id="CHEBI:30013"/>
        <dbReference type="ChEBI" id="CHEBI:30616"/>
        <dbReference type="ChEBI" id="CHEBI:61977"/>
        <dbReference type="ChEBI" id="CHEBI:456216"/>
        <dbReference type="EC" id="2.7.11.1"/>
    </reaction>
</comment>
<comment type="PTM">
    <text evidence="1">Autophosphorylated on serine and threonine residues.</text>
</comment>
<comment type="similarity">
    <text evidence="1">Belongs to the protein kinase superfamily. Ser/Thr protein kinase family.</text>
</comment>
<sequence length="930" mass="106618">MQRYDIIRMIGKGGMGEVYLAYDPVCSRKVALKRIREDLSDNELLKKRFLREAKIAADLVHPGVVPVFTICSDSDPVYYTMPYIEGYTLKSLLKSVWQCDSLPKDLAEQTSVATFLSIFHKICSTVEYVHSRGILHRDLKPDNILLGLFSEVVILDWGAALSKEMEEDFLSDIDVRIPGSLFSNMTIPGKIVGTPDYMAPERLRGTPASESTDIYALGVILYQMLTLSFPYRKKKGQKISLRHQISFPEEIAPHREIPPFLSQVVMRALAADPRERYRSVSALKADIEQHLQGSPEWTPKIVLHTQDRECWKFHEPILLSKYFPMLEVSPALWYSLAISKIESFSEVRLEYTLLRKGLEEGFGILLPPSEGVDHGDFYHGYGFWLHIKENILSVSLVKNGLEIQKTSRHIDGNKEKFFIAFEKQNHRLSLIIDNIVWTIHMDYLPARGGRIGVIIQDVADVCGNIVVLESSGSLQVSCLAVPDAFLNEKLYERAITFYRRIVESFPGRKEGYEAQFRIGIALLEKASENSDSEGFIQALEEFSTLHNSVAAPLEYLGKALVYQRLGEYNEEVKSLLLALKRYCQRPEISRVRDHVVYRLHEALYSNHRISLVFMLLALHVAPESINASEEEHFLQNLHGKIQDTLFCNLDISPVDFRSSKMELLLSYWSGFTPFLLGLFQRSWDLKDYRALADIFYTAADLGNKEFIEEYSGILRENIRTTTFSKEIVEILPDQLLCFLSGLEALTLQESIEKVFDGIENLDPVLILYLFDLFAKDALIHGRGEEILKAIALVEKYISPQQRYRYLLPYEVLSYLWMKDANKVYDLLSSYDESSWIDDSSHAFVLYGYWLALAEDSSLAYLHLSGCREDSVFPRALIGVFCSPLGICEEQLSYQERRQLLLQKFIFFHCLGNSEERDKCRTAYDSKERSL</sequence>
<accession>Q822K5</accession>
<feature type="chain" id="PRO_0000171190" description="Serine/threonine-protein kinase PknD">
    <location>
        <begin position="1"/>
        <end position="930"/>
    </location>
</feature>
<feature type="domain" description="Protein kinase" evidence="1">
    <location>
        <begin position="4"/>
        <end position="291"/>
    </location>
</feature>
<feature type="active site" description="Proton acceptor" evidence="1">
    <location>
        <position position="138"/>
    </location>
</feature>
<feature type="binding site" evidence="1">
    <location>
        <begin position="10"/>
        <end position="18"/>
    </location>
    <ligand>
        <name>ATP</name>
        <dbReference type="ChEBI" id="CHEBI:30616"/>
    </ligand>
</feature>
<feature type="binding site" evidence="1">
    <location>
        <position position="33"/>
    </location>
    <ligand>
        <name>ATP</name>
        <dbReference type="ChEBI" id="CHEBI:30616"/>
    </ligand>
</feature>
<reference key="1">
    <citation type="journal article" date="2003" name="Nucleic Acids Res.">
        <title>Genome sequence of Chlamydophila caviae (Chlamydia psittaci GPIC): examining the role of niche-specific genes in the evolution of the Chlamydiaceae.</title>
        <authorList>
            <person name="Read T.D."/>
            <person name="Myers G.S.A."/>
            <person name="Brunham R.C."/>
            <person name="Nelson W.C."/>
            <person name="Paulsen I.T."/>
            <person name="Heidelberg J.F."/>
            <person name="Holtzapple E.K."/>
            <person name="Khouri H.M."/>
            <person name="Federova N.B."/>
            <person name="Carty H.A."/>
            <person name="Umayam L.A."/>
            <person name="Haft D.H."/>
            <person name="Peterson J.D."/>
            <person name="Beanan M.J."/>
            <person name="White O."/>
            <person name="Salzberg S.L."/>
            <person name="Hsia R.-C."/>
            <person name="McClarty G."/>
            <person name="Rank R.G."/>
            <person name="Bavoil P.M."/>
            <person name="Fraser C.M."/>
        </authorList>
    </citation>
    <scope>NUCLEOTIDE SEQUENCE [LARGE SCALE GENOMIC DNA]</scope>
    <source>
        <strain>ATCC VR-813 / DSM 19441 / 03DC25 / GPIC</strain>
    </source>
</reference>
<gene>
    <name evidence="1" type="primary">pknD</name>
    <name type="ordered locus">CCA_00677</name>
</gene>
<name>PKND_CHLCV</name>
<dbReference type="EC" id="2.7.11.1" evidence="1"/>
<dbReference type="EMBL" id="AE015925">
    <property type="protein sequence ID" value="AAP05419.1"/>
    <property type="molecule type" value="Genomic_DNA"/>
</dbReference>
<dbReference type="RefSeq" id="WP_011006634.1">
    <property type="nucleotide sequence ID" value="NC_003361.3"/>
</dbReference>
<dbReference type="SMR" id="Q822K5"/>
<dbReference type="STRING" id="227941.CCA_00677"/>
<dbReference type="KEGG" id="cca:CCA_00677"/>
<dbReference type="eggNOG" id="COG0515">
    <property type="taxonomic scope" value="Bacteria"/>
</dbReference>
<dbReference type="HOGENOM" id="CLU_303227_0_0_0"/>
<dbReference type="OrthoDB" id="9788659at2"/>
<dbReference type="Proteomes" id="UP000002193">
    <property type="component" value="Chromosome"/>
</dbReference>
<dbReference type="GO" id="GO:0005524">
    <property type="term" value="F:ATP binding"/>
    <property type="evidence" value="ECO:0007669"/>
    <property type="project" value="UniProtKB-KW"/>
</dbReference>
<dbReference type="GO" id="GO:0106310">
    <property type="term" value="F:protein serine kinase activity"/>
    <property type="evidence" value="ECO:0007669"/>
    <property type="project" value="RHEA"/>
</dbReference>
<dbReference type="GO" id="GO:0004674">
    <property type="term" value="F:protein serine/threonine kinase activity"/>
    <property type="evidence" value="ECO:0007669"/>
    <property type="project" value="UniProtKB-UniRule"/>
</dbReference>
<dbReference type="CDD" id="cd14014">
    <property type="entry name" value="STKc_PknB_like"/>
    <property type="match status" value="1"/>
</dbReference>
<dbReference type="Gene3D" id="3.30.200.20">
    <property type="entry name" value="Phosphorylase Kinase, domain 1"/>
    <property type="match status" value="1"/>
</dbReference>
<dbReference type="Gene3D" id="1.25.40.10">
    <property type="entry name" value="Tetratricopeptide repeat domain"/>
    <property type="match status" value="1"/>
</dbReference>
<dbReference type="Gene3D" id="1.10.510.10">
    <property type="entry name" value="Transferase(Phosphotransferase) domain 1"/>
    <property type="match status" value="1"/>
</dbReference>
<dbReference type="HAMAP" id="MF_01957">
    <property type="entry name" value="PknD_kinase"/>
    <property type="match status" value="1"/>
</dbReference>
<dbReference type="InterPro" id="IPR011009">
    <property type="entry name" value="Kinase-like_dom_sf"/>
</dbReference>
<dbReference type="InterPro" id="IPR000719">
    <property type="entry name" value="Prot_kinase_dom"/>
</dbReference>
<dbReference type="InterPro" id="IPR017441">
    <property type="entry name" value="Protein_kinase_ATP_BS"/>
</dbReference>
<dbReference type="InterPro" id="IPR008271">
    <property type="entry name" value="Ser/Thr_kinase_AS"/>
</dbReference>
<dbReference type="InterPro" id="IPR023507">
    <property type="entry name" value="Ser/Thr_kinase_PknD"/>
</dbReference>
<dbReference type="InterPro" id="IPR011990">
    <property type="entry name" value="TPR-like_helical_dom_sf"/>
</dbReference>
<dbReference type="NCBIfam" id="NF009651">
    <property type="entry name" value="PRK13184.1"/>
    <property type="match status" value="1"/>
</dbReference>
<dbReference type="PANTHER" id="PTHR43289">
    <property type="entry name" value="MITOGEN-ACTIVATED PROTEIN KINASE KINASE KINASE 20-RELATED"/>
    <property type="match status" value="1"/>
</dbReference>
<dbReference type="PANTHER" id="PTHR43289:SF34">
    <property type="entry name" value="SERINE_THREONINE-PROTEIN KINASE YBDM-RELATED"/>
    <property type="match status" value="1"/>
</dbReference>
<dbReference type="Pfam" id="PF00069">
    <property type="entry name" value="Pkinase"/>
    <property type="match status" value="1"/>
</dbReference>
<dbReference type="SMART" id="SM00220">
    <property type="entry name" value="S_TKc"/>
    <property type="match status" value="1"/>
</dbReference>
<dbReference type="SUPFAM" id="SSF56112">
    <property type="entry name" value="Protein kinase-like (PK-like)"/>
    <property type="match status" value="1"/>
</dbReference>
<dbReference type="SUPFAM" id="SSF48452">
    <property type="entry name" value="TPR-like"/>
    <property type="match status" value="1"/>
</dbReference>
<dbReference type="PROSITE" id="PS00107">
    <property type="entry name" value="PROTEIN_KINASE_ATP"/>
    <property type="match status" value="1"/>
</dbReference>
<dbReference type="PROSITE" id="PS50011">
    <property type="entry name" value="PROTEIN_KINASE_DOM"/>
    <property type="match status" value="1"/>
</dbReference>
<dbReference type="PROSITE" id="PS00108">
    <property type="entry name" value="PROTEIN_KINASE_ST"/>
    <property type="match status" value="1"/>
</dbReference>